<sequence length="449" mass="52304">MAQVYSQEVYVQYLKRYGFVFQSSELYNGLANSWDFGPLGAVLKQQIKTALYNFFIKNKRDVLLIDTPIILNEQIWKASGHLANFTDALVDCKSCKLRFRVDHLDEQIKSATQWNPKQVNCPNCKANNWSEVRDFNLLFQTEIGVVNSEKRLVYLRPETAQGIFINFKQLLQLKKRPLPFGVAQFGKSFRNEVTPGNFLFRVREFEQFEMEWFCNPQASLSVFESQQQAIAHFLFKVLQLNPALVKQYEYDKNELAHYANKTVDFLFQFPHGLRELWGLADRGTFDLEQHQKYAKKPLDFFDGENNEHFIPAVVEPSVGIERLFYALIVSSYQQEQLEGEMREVLRLPFHLCPEQIVVLPLVNKLKETAQTLFEALSQTHWRIGFESAGSIGKRYRKADAIGTKFAITFDFESLEDQAVTIRERDSLKQVRVPIKELKAWFAQHDDQSH</sequence>
<reference key="1">
    <citation type="journal article" date="1996" name="Nucleic Acids Res.">
        <title>Complete sequence analysis of the genome of the bacterium Mycoplasma pneumoniae.</title>
        <authorList>
            <person name="Himmelreich R."/>
            <person name="Hilbert H."/>
            <person name="Plagens H."/>
            <person name="Pirkl E."/>
            <person name="Li B.-C."/>
            <person name="Herrmann R."/>
        </authorList>
    </citation>
    <scope>NUCLEOTIDE SEQUENCE [LARGE SCALE GENOMIC DNA]</scope>
    <source>
        <strain>ATCC 29342 / M129 / Subtype 1</strain>
    </source>
</reference>
<accession>P75425</accession>
<keyword id="KW-0030">Aminoacyl-tRNA synthetase</keyword>
<keyword id="KW-0067">ATP-binding</keyword>
<keyword id="KW-0963">Cytoplasm</keyword>
<keyword id="KW-0436">Ligase</keyword>
<keyword id="KW-0547">Nucleotide-binding</keyword>
<keyword id="KW-0648">Protein biosynthesis</keyword>
<keyword id="KW-1185">Reference proteome</keyword>
<name>SYG_MYCPN</name>
<gene>
    <name evidence="1" type="primary">glyQS</name>
    <name type="synonym">glyS</name>
    <name type="ordered locus">MPN_354</name>
    <name type="ORF">MP482</name>
</gene>
<evidence type="ECO:0000255" key="1">
    <source>
        <dbReference type="HAMAP-Rule" id="MF_00253"/>
    </source>
</evidence>
<feature type="chain" id="PRO_0000072968" description="Glycine--tRNA ligase">
    <location>
        <begin position="1"/>
        <end position="449"/>
    </location>
</feature>
<feature type="binding site" evidence="1">
    <location>
        <position position="100"/>
    </location>
    <ligand>
        <name>substrate</name>
    </ligand>
</feature>
<feature type="binding site" evidence="1">
    <location>
        <position position="158"/>
    </location>
    <ligand>
        <name>substrate</name>
    </ligand>
</feature>
<feature type="binding site" evidence="1">
    <location>
        <begin position="190"/>
        <end position="192"/>
    </location>
    <ligand>
        <name>ATP</name>
        <dbReference type="ChEBI" id="CHEBI:30616"/>
    </ligand>
</feature>
<feature type="binding site" evidence="1">
    <location>
        <begin position="200"/>
        <end position="205"/>
    </location>
    <ligand>
        <name>ATP</name>
        <dbReference type="ChEBI" id="CHEBI:30616"/>
    </ligand>
</feature>
<feature type="binding site" evidence="1">
    <location>
        <begin position="205"/>
        <end position="209"/>
    </location>
    <ligand>
        <name>substrate</name>
    </ligand>
</feature>
<feature type="binding site" evidence="1">
    <location>
        <begin position="275"/>
        <end position="276"/>
    </location>
    <ligand>
        <name>ATP</name>
        <dbReference type="ChEBI" id="CHEBI:30616"/>
    </ligand>
</feature>
<feature type="binding site" evidence="1">
    <location>
        <begin position="315"/>
        <end position="319"/>
    </location>
    <ligand>
        <name>substrate</name>
    </ligand>
</feature>
<feature type="binding site" evidence="1">
    <location>
        <begin position="319"/>
        <end position="322"/>
    </location>
    <ligand>
        <name>ATP</name>
        <dbReference type="ChEBI" id="CHEBI:30616"/>
    </ligand>
</feature>
<organism>
    <name type="scientific">Mycoplasma pneumoniae (strain ATCC 29342 / M129 / Subtype 1)</name>
    <name type="common">Mycoplasmoides pneumoniae</name>
    <dbReference type="NCBI Taxonomy" id="272634"/>
    <lineage>
        <taxon>Bacteria</taxon>
        <taxon>Bacillati</taxon>
        <taxon>Mycoplasmatota</taxon>
        <taxon>Mycoplasmoidales</taxon>
        <taxon>Mycoplasmoidaceae</taxon>
        <taxon>Mycoplasmoides</taxon>
    </lineage>
</organism>
<proteinExistence type="inferred from homology"/>
<dbReference type="EC" id="6.1.1.14" evidence="1"/>
<dbReference type="EMBL" id="U00089">
    <property type="protein sequence ID" value="AAB96130.1"/>
    <property type="molecule type" value="Genomic_DNA"/>
</dbReference>
<dbReference type="PIR" id="S73808">
    <property type="entry name" value="S73808"/>
</dbReference>
<dbReference type="RefSeq" id="NP_110042.1">
    <property type="nucleotide sequence ID" value="NC_000912.1"/>
</dbReference>
<dbReference type="RefSeq" id="WP_010874710.1">
    <property type="nucleotide sequence ID" value="NZ_OU342337.1"/>
</dbReference>
<dbReference type="SMR" id="P75425"/>
<dbReference type="IntAct" id="P75425">
    <property type="interactions" value="1"/>
</dbReference>
<dbReference type="STRING" id="272634.MPN_354"/>
<dbReference type="EnsemblBacteria" id="AAB96130">
    <property type="protein sequence ID" value="AAB96130"/>
    <property type="gene ID" value="MPN_354"/>
</dbReference>
<dbReference type="GeneID" id="66608989"/>
<dbReference type="KEGG" id="mpn:MPN_354"/>
<dbReference type="PATRIC" id="fig|272634.6.peg.381"/>
<dbReference type="HOGENOM" id="CLU_015515_2_0_14"/>
<dbReference type="OrthoDB" id="9760853at2"/>
<dbReference type="BioCyc" id="MPNE272634:G1GJ3-557-MONOMER"/>
<dbReference type="Proteomes" id="UP000000808">
    <property type="component" value="Chromosome"/>
</dbReference>
<dbReference type="GO" id="GO:0005737">
    <property type="term" value="C:cytoplasm"/>
    <property type="evidence" value="ECO:0007669"/>
    <property type="project" value="UniProtKB-SubCell"/>
</dbReference>
<dbReference type="GO" id="GO:0005524">
    <property type="term" value="F:ATP binding"/>
    <property type="evidence" value="ECO:0007669"/>
    <property type="project" value="UniProtKB-UniRule"/>
</dbReference>
<dbReference type="GO" id="GO:0004820">
    <property type="term" value="F:glycine-tRNA ligase activity"/>
    <property type="evidence" value="ECO:0000250"/>
    <property type="project" value="UniProtKB"/>
</dbReference>
<dbReference type="GO" id="GO:0046983">
    <property type="term" value="F:protein dimerization activity"/>
    <property type="evidence" value="ECO:0000250"/>
    <property type="project" value="UniProtKB"/>
</dbReference>
<dbReference type="GO" id="GO:0006426">
    <property type="term" value="P:glycyl-tRNA aminoacylation"/>
    <property type="evidence" value="ECO:0007669"/>
    <property type="project" value="UniProtKB-UniRule"/>
</dbReference>
<dbReference type="CDD" id="cd00774">
    <property type="entry name" value="GlyRS-like_core"/>
    <property type="match status" value="1"/>
</dbReference>
<dbReference type="CDD" id="cd00858">
    <property type="entry name" value="GlyRS_anticodon"/>
    <property type="match status" value="1"/>
</dbReference>
<dbReference type="FunFam" id="3.40.50.800:FF:000029">
    <property type="entry name" value="Glycine--tRNA ligase"/>
    <property type="match status" value="1"/>
</dbReference>
<dbReference type="Gene3D" id="3.40.50.800">
    <property type="entry name" value="Anticodon-binding domain"/>
    <property type="match status" value="1"/>
</dbReference>
<dbReference type="Gene3D" id="3.30.930.10">
    <property type="entry name" value="Bira Bifunctional Protein, Domain 2"/>
    <property type="match status" value="1"/>
</dbReference>
<dbReference type="HAMAP" id="MF_00253_B">
    <property type="entry name" value="Gly_tRNA_synth_B"/>
    <property type="match status" value="1"/>
</dbReference>
<dbReference type="InterPro" id="IPR002314">
    <property type="entry name" value="aa-tRNA-synt_IIb"/>
</dbReference>
<dbReference type="InterPro" id="IPR006195">
    <property type="entry name" value="aa-tRNA-synth_II"/>
</dbReference>
<dbReference type="InterPro" id="IPR045864">
    <property type="entry name" value="aa-tRNA-synth_II/BPL/LPL"/>
</dbReference>
<dbReference type="InterPro" id="IPR004154">
    <property type="entry name" value="Anticodon-bd"/>
</dbReference>
<dbReference type="InterPro" id="IPR036621">
    <property type="entry name" value="Anticodon-bd_dom_sf"/>
</dbReference>
<dbReference type="InterPro" id="IPR027031">
    <property type="entry name" value="Gly-tRNA_synthase/POLG2"/>
</dbReference>
<dbReference type="InterPro" id="IPR022961">
    <property type="entry name" value="Gly_tRNA_ligase_bac"/>
</dbReference>
<dbReference type="InterPro" id="IPR033731">
    <property type="entry name" value="GlyRS-like_core"/>
</dbReference>
<dbReference type="InterPro" id="IPR002315">
    <property type="entry name" value="tRNA-synt_gly"/>
</dbReference>
<dbReference type="NCBIfam" id="TIGR00389">
    <property type="entry name" value="glyS_dimeric"/>
    <property type="match status" value="1"/>
</dbReference>
<dbReference type="NCBIfam" id="NF003211">
    <property type="entry name" value="PRK04173.1"/>
    <property type="match status" value="1"/>
</dbReference>
<dbReference type="PANTHER" id="PTHR10745:SF8">
    <property type="entry name" value="DNA POLYMERASE SUBUNIT GAMMA-2, MITOCHONDRIAL"/>
    <property type="match status" value="1"/>
</dbReference>
<dbReference type="PANTHER" id="PTHR10745">
    <property type="entry name" value="GLYCYL-TRNA SYNTHETASE/DNA POLYMERASE SUBUNIT GAMMA-2"/>
    <property type="match status" value="1"/>
</dbReference>
<dbReference type="Pfam" id="PF03129">
    <property type="entry name" value="HGTP_anticodon"/>
    <property type="match status" value="1"/>
</dbReference>
<dbReference type="Pfam" id="PF00587">
    <property type="entry name" value="tRNA-synt_2b"/>
    <property type="match status" value="1"/>
</dbReference>
<dbReference type="PRINTS" id="PR01043">
    <property type="entry name" value="TRNASYNTHGLY"/>
</dbReference>
<dbReference type="SUPFAM" id="SSF52954">
    <property type="entry name" value="Class II aaRS ABD-related"/>
    <property type="match status" value="1"/>
</dbReference>
<dbReference type="SUPFAM" id="SSF55681">
    <property type="entry name" value="Class II aaRS and biotin synthetases"/>
    <property type="match status" value="1"/>
</dbReference>
<dbReference type="PROSITE" id="PS50862">
    <property type="entry name" value="AA_TRNA_LIGASE_II"/>
    <property type="match status" value="1"/>
</dbReference>
<protein>
    <recommendedName>
        <fullName evidence="1">Glycine--tRNA ligase</fullName>
        <ecNumber evidence="1">6.1.1.14</ecNumber>
    </recommendedName>
    <alternativeName>
        <fullName evidence="1">Glycyl-tRNA synthetase</fullName>
        <shortName evidence="1">GlyRS</shortName>
    </alternativeName>
</protein>
<comment type="function">
    <text evidence="1">Catalyzes the attachment of glycine to tRNA(Gly).</text>
</comment>
<comment type="catalytic activity">
    <reaction evidence="1">
        <text>tRNA(Gly) + glycine + ATP = glycyl-tRNA(Gly) + AMP + diphosphate</text>
        <dbReference type="Rhea" id="RHEA:16013"/>
        <dbReference type="Rhea" id="RHEA-COMP:9664"/>
        <dbReference type="Rhea" id="RHEA-COMP:9683"/>
        <dbReference type="ChEBI" id="CHEBI:30616"/>
        <dbReference type="ChEBI" id="CHEBI:33019"/>
        <dbReference type="ChEBI" id="CHEBI:57305"/>
        <dbReference type="ChEBI" id="CHEBI:78442"/>
        <dbReference type="ChEBI" id="CHEBI:78522"/>
        <dbReference type="ChEBI" id="CHEBI:456215"/>
        <dbReference type="EC" id="6.1.1.14"/>
    </reaction>
</comment>
<comment type="subunit">
    <text evidence="1">Homodimer.</text>
</comment>
<comment type="subcellular location">
    <subcellularLocation>
        <location evidence="1">Cytoplasm</location>
    </subcellularLocation>
</comment>
<comment type="similarity">
    <text evidence="1">Belongs to the class-II aminoacyl-tRNA synthetase family.</text>
</comment>